<feature type="chain" id="PRO_1000149146" description="2-isopropylmalate synthase">
    <location>
        <begin position="1"/>
        <end position="514"/>
    </location>
</feature>
<feature type="domain" description="Pyruvate carboxyltransferase" evidence="1">
    <location>
        <begin position="5"/>
        <end position="268"/>
    </location>
</feature>
<feature type="region of interest" description="Regulatory domain" evidence="1">
    <location>
        <begin position="395"/>
        <end position="514"/>
    </location>
</feature>
<feature type="binding site" evidence="1">
    <location>
        <position position="14"/>
    </location>
    <ligand>
        <name>Mn(2+)</name>
        <dbReference type="ChEBI" id="CHEBI:29035"/>
    </ligand>
</feature>
<feature type="binding site" evidence="1">
    <location>
        <position position="202"/>
    </location>
    <ligand>
        <name>Mn(2+)</name>
        <dbReference type="ChEBI" id="CHEBI:29035"/>
    </ligand>
</feature>
<feature type="binding site" evidence="1">
    <location>
        <position position="204"/>
    </location>
    <ligand>
        <name>Mn(2+)</name>
        <dbReference type="ChEBI" id="CHEBI:29035"/>
    </ligand>
</feature>
<feature type="binding site" evidence="1">
    <location>
        <position position="239"/>
    </location>
    <ligand>
        <name>Mn(2+)</name>
        <dbReference type="ChEBI" id="CHEBI:29035"/>
    </ligand>
</feature>
<name>LEU1_BURO0</name>
<proteinExistence type="inferred from homology"/>
<keyword id="KW-0028">Amino-acid biosynthesis</keyword>
<keyword id="KW-0100">Branched-chain amino acid biosynthesis</keyword>
<keyword id="KW-0963">Cytoplasm</keyword>
<keyword id="KW-0432">Leucine biosynthesis</keyword>
<keyword id="KW-0464">Manganese</keyword>
<keyword id="KW-0479">Metal-binding</keyword>
<keyword id="KW-0808">Transferase</keyword>
<comment type="function">
    <text evidence="1">Catalyzes the condensation of the acetyl group of acetyl-CoA with 3-methyl-2-oxobutanoate (2-ketoisovalerate) to form 3-carboxy-3-hydroxy-4-methylpentanoate (2-isopropylmalate).</text>
</comment>
<comment type="catalytic activity">
    <reaction evidence="1">
        <text>3-methyl-2-oxobutanoate + acetyl-CoA + H2O = (2S)-2-isopropylmalate + CoA + H(+)</text>
        <dbReference type="Rhea" id="RHEA:21524"/>
        <dbReference type="ChEBI" id="CHEBI:1178"/>
        <dbReference type="ChEBI" id="CHEBI:11851"/>
        <dbReference type="ChEBI" id="CHEBI:15377"/>
        <dbReference type="ChEBI" id="CHEBI:15378"/>
        <dbReference type="ChEBI" id="CHEBI:57287"/>
        <dbReference type="ChEBI" id="CHEBI:57288"/>
        <dbReference type="EC" id="2.3.3.13"/>
    </reaction>
</comment>
<comment type="cofactor">
    <cofactor evidence="1">
        <name>Mn(2+)</name>
        <dbReference type="ChEBI" id="CHEBI:29035"/>
    </cofactor>
</comment>
<comment type="pathway">
    <text evidence="1">Amino-acid biosynthesis; L-leucine biosynthesis; L-leucine from 3-methyl-2-oxobutanoate: step 1/4.</text>
</comment>
<comment type="subunit">
    <text evidence="1">Homodimer.</text>
</comment>
<comment type="subcellular location">
    <subcellularLocation>
        <location evidence="1">Cytoplasm</location>
    </subcellularLocation>
</comment>
<comment type="similarity">
    <text evidence="1">Belongs to the alpha-IPM synthase/homocitrate synthase family. LeuA type 1 subfamily.</text>
</comment>
<accession>B1JVQ1</accession>
<organism>
    <name type="scientific">Burkholderia orbicola (strain MC0-3)</name>
    <dbReference type="NCBI Taxonomy" id="406425"/>
    <lineage>
        <taxon>Bacteria</taxon>
        <taxon>Pseudomonadati</taxon>
        <taxon>Pseudomonadota</taxon>
        <taxon>Betaproteobacteria</taxon>
        <taxon>Burkholderiales</taxon>
        <taxon>Burkholderiaceae</taxon>
        <taxon>Burkholderia</taxon>
        <taxon>Burkholderia cepacia complex</taxon>
        <taxon>Burkholderia orbicola</taxon>
    </lineage>
</organism>
<dbReference type="EC" id="2.3.3.13" evidence="1"/>
<dbReference type="EMBL" id="CP000958">
    <property type="protein sequence ID" value="ACA91444.1"/>
    <property type="molecule type" value="Genomic_DNA"/>
</dbReference>
<dbReference type="RefSeq" id="WP_011545821.1">
    <property type="nucleotide sequence ID" value="NC_010508.1"/>
</dbReference>
<dbReference type="SMR" id="B1JVQ1"/>
<dbReference type="GeneID" id="83049072"/>
<dbReference type="KEGG" id="bcm:Bcenmc03_2283"/>
<dbReference type="HOGENOM" id="CLU_022158_0_1_4"/>
<dbReference type="UniPathway" id="UPA00048">
    <property type="reaction ID" value="UER00070"/>
</dbReference>
<dbReference type="Proteomes" id="UP000002169">
    <property type="component" value="Chromosome 1"/>
</dbReference>
<dbReference type="GO" id="GO:0005829">
    <property type="term" value="C:cytosol"/>
    <property type="evidence" value="ECO:0007669"/>
    <property type="project" value="TreeGrafter"/>
</dbReference>
<dbReference type="GO" id="GO:0003852">
    <property type="term" value="F:2-isopropylmalate synthase activity"/>
    <property type="evidence" value="ECO:0007669"/>
    <property type="project" value="UniProtKB-UniRule"/>
</dbReference>
<dbReference type="GO" id="GO:0003985">
    <property type="term" value="F:acetyl-CoA C-acetyltransferase activity"/>
    <property type="evidence" value="ECO:0007669"/>
    <property type="project" value="UniProtKB-UniRule"/>
</dbReference>
<dbReference type="GO" id="GO:0030145">
    <property type="term" value="F:manganese ion binding"/>
    <property type="evidence" value="ECO:0007669"/>
    <property type="project" value="UniProtKB-UniRule"/>
</dbReference>
<dbReference type="GO" id="GO:0009098">
    <property type="term" value="P:L-leucine biosynthetic process"/>
    <property type="evidence" value="ECO:0007669"/>
    <property type="project" value="UniProtKB-UniRule"/>
</dbReference>
<dbReference type="CDD" id="cd07940">
    <property type="entry name" value="DRE_TIM_IPMS"/>
    <property type="match status" value="1"/>
</dbReference>
<dbReference type="FunFam" id="1.10.238.260:FF:000001">
    <property type="entry name" value="2-isopropylmalate synthase"/>
    <property type="match status" value="1"/>
</dbReference>
<dbReference type="FunFam" id="3.20.20.70:FF:000010">
    <property type="entry name" value="2-isopropylmalate synthase"/>
    <property type="match status" value="1"/>
</dbReference>
<dbReference type="FunFam" id="3.30.160.270:FF:000003">
    <property type="entry name" value="2-isopropylmalate synthase"/>
    <property type="match status" value="1"/>
</dbReference>
<dbReference type="Gene3D" id="1.10.238.260">
    <property type="match status" value="1"/>
</dbReference>
<dbReference type="Gene3D" id="3.30.160.270">
    <property type="match status" value="1"/>
</dbReference>
<dbReference type="Gene3D" id="3.20.20.70">
    <property type="entry name" value="Aldolase class I"/>
    <property type="match status" value="1"/>
</dbReference>
<dbReference type="HAMAP" id="MF_01025">
    <property type="entry name" value="LeuA_type1"/>
    <property type="match status" value="1"/>
</dbReference>
<dbReference type="InterPro" id="IPR050073">
    <property type="entry name" value="2-IPM_HCS-like"/>
</dbReference>
<dbReference type="InterPro" id="IPR013709">
    <property type="entry name" value="2-isopropylmalate_synth_dimer"/>
</dbReference>
<dbReference type="InterPro" id="IPR002034">
    <property type="entry name" value="AIPM/Hcit_synth_CS"/>
</dbReference>
<dbReference type="InterPro" id="IPR013785">
    <property type="entry name" value="Aldolase_TIM"/>
</dbReference>
<dbReference type="InterPro" id="IPR054691">
    <property type="entry name" value="LeuA/HCS_post-cat"/>
</dbReference>
<dbReference type="InterPro" id="IPR036230">
    <property type="entry name" value="LeuA_allosteric_dom_sf"/>
</dbReference>
<dbReference type="InterPro" id="IPR005671">
    <property type="entry name" value="LeuA_bact_synth"/>
</dbReference>
<dbReference type="InterPro" id="IPR000891">
    <property type="entry name" value="PYR_CT"/>
</dbReference>
<dbReference type="NCBIfam" id="TIGR00973">
    <property type="entry name" value="leuA_bact"/>
    <property type="match status" value="1"/>
</dbReference>
<dbReference type="NCBIfam" id="NF002086">
    <property type="entry name" value="PRK00915.1-3"/>
    <property type="match status" value="1"/>
</dbReference>
<dbReference type="NCBIfam" id="NF002087">
    <property type="entry name" value="PRK00915.1-4"/>
    <property type="match status" value="1"/>
</dbReference>
<dbReference type="PANTHER" id="PTHR10277:SF9">
    <property type="entry name" value="2-ISOPROPYLMALATE SYNTHASE 1, CHLOROPLASTIC-RELATED"/>
    <property type="match status" value="1"/>
</dbReference>
<dbReference type="PANTHER" id="PTHR10277">
    <property type="entry name" value="HOMOCITRATE SYNTHASE-RELATED"/>
    <property type="match status" value="1"/>
</dbReference>
<dbReference type="Pfam" id="PF22617">
    <property type="entry name" value="HCS_D2"/>
    <property type="match status" value="1"/>
</dbReference>
<dbReference type="Pfam" id="PF00682">
    <property type="entry name" value="HMGL-like"/>
    <property type="match status" value="1"/>
</dbReference>
<dbReference type="Pfam" id="PF08502">
    <property type="entry name" value="LeuA_dimer"/>
    <property type="match status" value="1"/>
</dbReference>
<dbReference type="SMART" id="SM00917">
    <property type="entry name" value="LeuA_dimer"/>
    <property type="match status" value="1"/>
</dbReference>
<dbReference type="SUPFAM" id="SSF110921">
    <property type="entry name" value="2-isopropylmalate synthase LeuA, allosteric (dimerisation) domain"/>
    <property type="match status" value="1"/>
</dbReference>
<dbReference type="SUPFAM" id="SSF51569">
    <property type="entry name" value="Aldolase"/>
    <property type="match status" value="1"/>
</dbReference>
<dbReference type="PROSITE" id="PS00815">
    <property type="entry name" value="AIPM_HOMOCIT_SYNTH_1"/>
    <property type="match status" value="1"/>
</dbReference>
<dbReference type="PROSITE" id="PS00816">
    <property type="entry name" value="AIPM_HOMOCIT_SYNTH_2"/>
    <property type="match status" value="1"/>
</dbReference>
<dbReference type="PROSITE" id="PS50991">
    <property type="entry name" value="PYR_CT"/>
    <property type="match status" value="1"/>
</dbReference>
<protein>
    <recommendedName>
        <fullName evidence="1">2-isopropylmalate synthase</fullName>
        <ecNumber evidence="1">2.3.3.13</ecNumber>
    </recommendedName>
    <alternativeName>
        <fullName evidence="1">Alpha-IPM synthase</fullName>
    </alternativeName>
    <alternativeName>
        <fullName evidence="1">Alpha-isopropylmalate synthase</fullName>
    </alternativeName>
</protein>
<sequence>MTDKLIIFDTTLRDGEQSPGASMTKEEKIRIAKHLERMKVDVIEAGFAASSNGDFDAIHTIAGLVKDSTICSLARANDKDIQRAADALKPANSARIHTFIATSPLHMEKKLRMTPDQVFEQARLAVRFARKFTDNVEFSPEDGSRSDLDFLCRVLEAVIAEGATTINIADTVGYGVPELYGNLVKTLRERIPNSDKAIFSVHCHNDLGMAVANSLAGVKIGGARQIECTINGLGERAGNTSLEEIVMAVKTRKDYFGLDVGIDTTQIVPTSKLVSQITGFVVQPNKAVVGANAFAHASGIHQDGVLKARDTYEIMRAEDVGWTANKIVLGKLSGRNAFKQRLQELGVSLDSEAELNAAFMRFKDLADRKAEIFDEDIIAIVSEESALAQEQEHFKFVSLSQRSETGEQPQAKVVFAVEGKEVTGEARGNGPVDATFNAIEGEVGSGSELLLYSVNAITTGTQAQGEVTVRLSKSGRIVNGVGTDPDIVAASAKAYISALNKLHSKDDKLNPQRA</sequence>
<evidence type="ECO:0000255" key="1">
    <source>
        <dbReference type="HAMAP-Rule" id="MF_01025"/>
    </source>
</evidence>
<reference key="1">
    <citation type="submission" date="2008-02" db="EMBL/GenBank/DDBJ databases">
        <title>Complete sequence of chromosome 1 of Burkholderia cenocepacia MC0-3.</title>
        <authorList>
            <person name="Copeland A."/>
            <person name="Lucas S."/>
            <person name="Lapidus A."/>
            <person name="Barry K."/>
            <person name="Bruce D."/>
            <person name="Goodwin L."/>
            <person name="Glavina del Rio T."/>
            <person name="Dalin E."/>
            <person name="Tice H."/>
            <person name="Pitluck S."/>
            <person name="Chain P."/>
            <person name="Malfatti S."/>
            <person name="Shin M."/>
            <person name="Vergez L."/>
            <person name="Schmutz J."/>
            <person name="Larimer F."/>
            <person name="Land M."/>
            <person name="Hauser L."/>
            <person name="Kyrpides N."/>
            <person name="Mikhailova N."/>
            <person name="Tiedje J."/>
            <person name="Richardson P."/>
        </authorList>
    </citation>
    <scope>NUCLEOTIDE SEQUENCE [LARGE SCALE GENOMIC DNA]</scope>
    <source>
        <strain>MC0-3</strain>
    </source>
</reference>
<gene>
    <name evidence="1" type="primary">leuA</name>
    <name type="ordered locus">Bcenmc03_2283</name>
</gene>